<protein>
    <recommendedName>
        <fullName evidence="1">L-seryl-tRNA(Sec) selenium transferase</fullName>
        <ecNumber evidence="1">2.9.1.1</ecNumber>
    </recommendedName>
    <alternativeName>
        <fullName evidence="1">Selenocysteine synthase</fullName>
        <shortName evidence="1">Sec synthase</shortName>
    </alternativeName>
    <alternativeName>
        <fullName evidence="1">Selenocysteinyl-tRNA(Sec) synthase</fullName>
    </alternativeName>
</protein>
<reference key="1">
    <citation type="submission" date="2007-10" db="EMBL/GenBank/DDBJ databases">
        <title>Complete genome of Alkaliphilus oremlandii OhILAs.</title>
        <authorList>
            <person name="Copeland A."/>
            <person name="Lucas S."/>
            <person name="Lapidus A."/>
            <person name="Barry K."/>
            <person name="Detter J.C."/>
            <person name="Glavina del Rio T."/>
            <person name="Hammon N."/>
            <person name="Israni S."/>
            <person name="Dalin E."/>
            <person name="Tice H."/>
            <person name="Pitluck S."/>
            <person name="Chain P."/>
            <person name="Malfatti S."/>
            <person name="Shin M."/>
            <person name="Vergez L."/>
            <person name="Schmutz J."/>
            <person name="Larimer F."/>
            <person name="Land M."/>
            <person name="Hauser L."/>
            <person name="Kyrpides N."/>
            <person name="Mikhailova N."/>
            <person name="Stolz J.F."/>
            <person name="Dawson A."/>
            <person name="Fisher E."/>
            <person name="Crable B."/>
            <person name="Perera E."/>
            <person name="Lisak J."/>
            <person name="Ranganathan M."/>
            <person name="Basu P."/>
            <person name="Richardson P."/>
        </authorList>
    </citation>
    <scope>NUCLEOTIDE SEQUENCE [LARGE SCALE GENOMIC DNA]</scope>
    <source>
        <strain>OhILAs</strain>
    </source>
</reference>
<keyword id="KW-0963">Cytoplasm</keyword>
<keyword id="KW-0648">Protein biosynthesis</keyword>
<keyword id="KW-0663">Pyridoxal phosphate</keyword>
<keyword id="KW-1185">Reference proteome</keyword>
<keyword id="KW-0711">Selenium</keyword>
<keyword id="KW-0808">Transferase</keyword>
<dbReference type="EC" id="2.9.1.1" evidence="1"/>
<dbReference type="EMBL" id="CP000853">
    <property type="protein sequence ID" value="ABW19276.1"/>
    <property type="molecule type" value="Genomic_DNA"/>
</dbReference>
<dbReference type="RefSeq" id="WP_012159588.1">
    <property type="nucleotide sequence ID" value="NC_009922.1"/>
</dbReference>
<dbReference type="SMR" id="A8MHJ4"/>
<dbReference type="STRING" id="350688.Clos_1736"/>
<dbReference type="KEGG" id="aoe:Clos_1736"/>
<dbReference type="eggNOG" id="COG1921">
    <property type="taxonomic scope" value="Bacteria"/>
</dbReference>
<dbReference type="HOGENOM" id="CLU_038142_1_0_9"/>
<dbReference type="OrthoDB" id="9787096at2"/>
<dbReference type="UniPathway" id="UPA00906">
    <property type="reaction ID" value="UER00896"/>
</dbReference>
<dbReference type="Proteomes" id="UP000000269">
    <property type="component" value="Chromosome"/>
</dbReference>
<dbReference type="GO" id="GO:0005737">
    <property type="term" value="C:cytoplasm"/>
    <property type="evidence" value="ECO:0007669"/>
    <property type="project" value="UniProtKB-SubCell"/>
</dbReference>
<dbReference type="GO" id="GO:0004125">
    <property type="term" value="F:L-seryl-tRNA(Sec) selenium transferase activity"/>
    <property type="evidence" value="ECO:0007669"/>
    <property type="project" value="UniProtKB-UniRule"/>
</dbReference>
<dbReference type="GO" id="GO:0001717">
    <property type="term" value="P:conversion of seryl-tRNAsec to selenocys-tRNAsec"/>
    <property type="evidence" value="ECO:0007669"/>
    <property type="project" value="UniProtKB-UniRule"/>
</dbReference>
<dbReference type="GO" id="GO:0001514">
    <property type="term" value="P:selenocysteine incorporation"/>
    <property type="evidence" value="ECO:0007669"/>
    <property type="project" value="UniProtKB-UniRule"/>
</dbReference>
<dbReference type="Gene3D" id="3.90.1150.180">
    <property type="match status" value="1"/>
</dbReference>
<dbReference type="Gene3D" id="3.40.640.10">
    <property type="entry name" value="Type I PLP-dependent aspartate aminotransferase-like (Major domain)"/>
    <property type="match status" value="1"/>
</dbReference>
<dbReference type="HAMAP" id="MF_00423">
    <property type="entry name" value="SelA"/>
    <property type="match status" value="1"/>
</dbReference>
<dbReference type="InterPro" id="IPR015424">
    <property type="entry name" value="PyrdxlP-dep_Trfase"/>
</dbReference>
<dbReference type="InterPro" id="IPR015421">
    <property type="entry name" value="PyrdxlP-dep_Trfase_major"/>
</dbReference>
<dbReference type="InterPro" id="IPR018319">
    <property type="entry name" value="SelA-like"/>
</dbReference>
<dbReference type="InterPro" id="IPR004534">
    <property type="entry name" value="SelA_trans"/>
</dbReference>
<dbReference type="InterPro" id="IPR025862">
    <property type="entry name" value="SelA_trans_N_dom"/>
</dbReference>
<dbReference type="NCBIfam" id="TIGR00474">
    <property type="entry name" value="selA"/>
    <property type="match status" value="1"/>
</dbReference>
<dbReference type="PANTHER" id="PTHR32328">
    <property type="entry name" value="L-SERYL-TRNA(SEC) SELENIUM TRANSFERASE"/>
    <property type="match status" value="1"/>
</dbReference>
<dbReference type="PANTHER" id="PTHR32328:SF0">
    <property type="entry name" value="L-SERYL-TRNA(SEC) SELENIUM TRANSFERASE"/>
    <property type="match status" value="1"/>
</dbReference>
<dbReference type="Pfam" id="PF12390">
    <property type="entry name" value="Se-cys_synth_N"/>
    <property type="match status" value="1"/>
</dbReference>
<dbReference type="Pfam" id="PF03841">
    <property type="entry name" value="SelA"/>
    <property type="match status" value="1"/>
</dbReference>
<dbReference type="SUPFAM" id="SSF53383">
    <property type="entry name" value="PLP-dependent transferases"/>
    <property type="match status" value="1"/>
</dbReference>
<evidence type="ECO:0000255" key="1">
    <source>
        <dbReference type="HAMAP-Rule" id="MF_00423"/>
    </source>
</evidence>
<proteinExistence type="inferred from homology"/>
<name>SELA_ALKOO</name>
<sequence length="467" mass="52183">MNKGKIFSMLPSVDQLLNNEAIISLIGVIPRSVVVKEIRQMIEEYRKNILMLNESQIIDFEIDIEEIIRKIIKNCYNFMDMNLREVINGTGTVLHTNLGRSLLSESIKEQVWDVASGYSTLEIDVTEGKRGSRYNHVSEIIKFITGAEDALVVNNNAAAVMLVLSTMAKDKEVILSRGEMVEIGGSFRVPDVMAQSGAKLVDIGTTNKTHLKDYENAVSEDTAAFLKVHTSNYKILGFTESVEVKELVNMGRKYNIPVIEDIGSGVLIDLQKYGLSYEPTVQESVSSGVDIVTFSGDKLLGGPQAGIIVGKKLYIDQMKQNPLTRAFRVDKLTMAALEATLKLYLDEEMALQKIPTLKMLTETAESIYERAKVLHSMIVSEKLDVVAGIAKDYSEVGGGSLPLEKLSTYVIEIESKSISTSKLENRLRKYRTPIFSRVRDNKVIIDLRTIKPEQYEIIVQAFNEVIQ</sequence>
<organism>
    <name type="scientific">Alkaliphilus oremlandii (strain OhILAs)</name>
    <name type="common">Clostridium oremlandii (strain OhILAs)</name>
    <dbReference type="NCBI Taxonomy" id="350688"/>
    <lineage>
        <taxon>Bacteria</taxon>
        <taxon>Bacillati</taxon>
        <taxon>Bacillota</taxon>
        <taxon>Clostridia</taxon>
        <taxon>Peptostreptococcales</taxon>
        <taxon>Natronincolaceae</taxon>
        <taxon>Alkaliphilus</taxon>
    </lineage>
</organism>
<comment type="function">
    <text evidence="1">Converts seryl-tRNA(Sec) to selenocysteinyl-tRNA(Sec) required for selenoprotein biosynthesis.</text>
</comment>
<comment type="catalytic activity">
    <reaction evidence="1">
        <text>L-seryl-tRNA(Sec) + selenophosphate + H(+) = L-selenocysteinyl-tRNA(Sec) + phosphate</text>
        <dbReference type="Rhea" id="RHEA:22728"/>
        <dbReference type="Rhea" id="RHEA-COMP:9742"/>
        <dbReference type="Rhea" id="RHEA-COMP:9743"/>
        <dbReference type="ChEBI" id="CHEBI:15378"/>
        <dbReference type="ChEBI" id="CHEBI:16144"/>
        <dbReference type="ChEBI" id="CHEBI:43474"/>
        <dbReference type="ChEBI" id="CHEBI:78533"/>
        <dbReference type="ChEBI" id="CHEBI:78573"/>
        <dbReference type="EC" id="2.9.1.1"/>
    </reaction>
</comment>
<comment type="cofactor">
    <cofactor evidence="1">
        <name>pyridoxal 5'-phosphate</name>
        <dbReference type="ChEBI" id="CHEBI:597326"/>
    </cofactor>
</comment>
<comment type="pathway">
    <text evidence="1">Aminoacyl-tRNA biosynthesis; selenocysteinyl-tRNA(Sec) biosynthesis; selenocysteinyl-tRNA(Sec) from L-seryl-tRNA(Sec) (bacterial route): step 1/1.</text>
</comment>
<comment type="subcellular location">
    <subcellularLocation>
        <location evidence="1">Cytoplasm</location>
    </subcellularLocation>
</comment>
<comment type="similarity">
    <text evidence="1">Belongs to the SelA family.</text>
</comment>
<accession>A8MHJ4</accession>
<feature type="chain" id="PRO_1000060096" description="L-seryl-tRNA(Sec) selenium transferase">
    <location>
        <begin position="1"/>
        <end position="467"/>
    </location>
</feature>
<feature type="modified residue" description="N6-(pyridoxal phosphate)lysine" evidence="1">
    <location>
        <position position="298"/>
    </location>
</feature>
<gene>
    <name evidence="1" type="primary">selA</name>
    <name type="ordered locus">Clos_1736</name>
</gene>